<name>PE03_MYCTU</name>
<accession>Q79G04</accession>
<accession>I6XUK4</accession>
<accession>L0T2V2</accession>
<organism>
    <name type="scientific">Mycobacterium tuberculosis (strain ATCC 25618 / H37Rv)</name>
    <dbReference type="NCBI Taxonomy" id="83332"/>
    <lineage>
        <taxon>Bacteria</taxon>
        <taxon>Bacillati</taxon>
        <taxon>Actinomycetota</taxon>
        <taxon>Actinomycetes</taxon>
        <taxon>Mycobacteriales</taxon>
        <taxon>Mycobacteriaceae</taxon>
        <taxon>Mycobacterium</taxon>
        <taxon>Mycobacterium tuberculosis complex</taxon>
    </lineage>
</organism>
<evidence type="ECO:0000255" key="1"/>
<evidence type="ECO:0000269" key="2">
    <source>
    </source>
</evidence>
<evidence type="ECO:0000305" key="3"/>
<evidence type="ECO:0000312" key="4">
    <source>
        <dbReference type="EMBL" id="CCP42885.1"/>
    </source>
</evidence>
<sequence length="468" mass="48608">MSYVIAAPEMLATTAADVDGIGSAIRAASASAAGPTTGLLAAAADEVSSAAAALFSEYARECQEVLKQAAAFHGEFTRALAAAGAAYAQAEASNTAAMSGTAGSSGALGSVGMLSGNPLTALMMGGTGEPILSDRVLAIIDSAYIRPIFGPNNPVAQYTPEQWWPFIGNLSLDQSIAQGVTLLNNGINAELQNGHDVVVFGYSQSAAVATNEIRALMALPPGQAPDPSRLAFTLIGNINNPNGGVLERYVGLYLPFLDMSFNGATPPDSPYQTYMYTGQYDGYAHNPQYPLNILSDLNAFMGIRWVHNAYPFTAAEVANAVPLPTSPGYTGNTHYYMFLTQDLPLLQPIRAIPFVGTPIAELIQPDLRVLVDLGYGYGYADVPTPASLFAPINPIAVASALATGTVQGPQAALVSIGLLPQSALPNTYPYLPSANPGLMFNFGQSSVTELSVLSGALGSVARLIPPIA</sequence>
<protein>
    <recommendedName>
        <fullName evidence="3">PE family protein PE3</fullName>
    </recommendedName>
</protein>
<feature type="chain" id="PRO_0000438129" description="PE family protein PE3">
    <location>
        <begin position="1"/>
        <end position="468"/>
    </location>
</feature>
<feature type="domain" description="PE" evidence="1">
    <location>
        <begin position="1"/>
        <end position="92"/>
    </location>
</feature>
<feature type="domain" description="PE-PPE" evidence="1">
    <location>
        <begin position="154"/>
        <end position="375"/>
    </location>
</feature>
<proteinExistence type="evidence at protein level"/>
<reference key="1">
    <citation type="journal article" date="1998" name="Nature">
        <title>Deciphering the biology of Mycobacterium tuberculosis from the complete genome sequence.</title>
        <authorList>
            <person name="Cole S.T."/>
            <person name="Brosch R."/>
            <person name="Parkhill J."/>
            <person name="Garnier T."/>
            <person name="Churcher C.M."/>
            <person name="Harris D.E."/>
            <person name="Gordon S.V."/>
            <person name="Eiglmeier K."/>
            <person name="Gas S."/>
            <person name="Barry C.E. III"/>
            <person name="Tekaia F."/>
            <person name="Badcock K."/>
            <person name="Basham D."/>
            <person name="Brown D."/>
            <person name="Chillingworth T."/>
            <person name="Connor R."/>
            <person name="Davies R.M."/>
            <person name="Devlin K."/>
            <person name="Feltwell T."/>
            <person name="Gentles S."/>
            <person name="Hamlin N."/>
            <person name="Holroyd S."/>
            <person name="Hornsby T."/>
            <person name="Jagels K."/>
            <person name="Krogh A."/>
            <person name="McLean J."/>
            <person name="Moule S."/>
            <person name="Murphy L.D."/>
            <person name="Oliver S."/>
            <person name="Osborne J."/>
            <person name="Quail M.A."/>
            <person name="Rajandream M.A."/>
            <person name="Rogers J."/>
            <person name="Rutter S."/>
            <person name="Seeger K."/>
            <person name="Skelton S."/>
            <person name="Squares S."/>
            <person name="Squares R."/>
            <person name="Sulston J.E."/>
            <person name="Taylor K."/>
            <person name="Whitehead S."/>
            <person name="Barrell B.G."/>
        </authorList>
    </citation>
    <scope>NUCLEOTIDE SEQUENCE [LARGE SCALE GENOMIC DNA]</scope>
    <source>
        <strain>ATCC 25618 / H37Rv</strain>
    </source>
</reference>
<reference key="2">
    <citation type="journal article" date="2013" name="Med. Microbiol. Immunol.">
        <title>Putative roles of a proline-glutamic acid-rich protein (PE3) in intracellular survival and as a candidate for subunit vaccine against Mycobacterium tuberculosis.</title>
        <authorList>
            <person name="Singh S.K."/>
            <person name="Kumari R."/>
            <person name="Singh D.K."/>
            <person name="Tiwari S."/>
            <person name="Singh P.K."/>
            <person name="Sharma S."/>
            <person name="Srivastava K.K."/>
        </authorList>
    </citation>
    <scope>FUNCTION</scope>
    <scope>SUBCELLULAR LOCATION</scope>
    <scope>INDUCTION</scope>
    <scope>BIOTECHNOLOGY</scope>
    <source>
        <strain>H37Rv</strain>
    </source>
</reference>
<dbReference type="EMBL" id="AL123456">
    <property type="protein sequence ID" value="CCP42885.1"/>
    <property type="molecule type" value="Genomic_DNA"/>
</dbReference>
<dbReference type="RefSeq" id="WP_003911094.1">
    <property type="nucleotide sequence ID" value="NZ_NVQJ01000001.1"/>
</dbReference>
<dbReference type="RefSeq" id="YP_177697.1">
    <property type="nucleotide sequence ID" value="NC_000962.3"/>
</dbReference>
<dbReference type="SMR" id="Q79G04"/>
<dbReference type="STRING" id="83332.Rv0159c"/>
<dbReference type="ESTHER" id="myctu-Rv0159c">
    <property type="family name" value="PE-PPE"/>
</dbReference>
<dbReference type="PaxDb" id="83332-Rv0159c"/>
<dbReference type="DNASU" id="886826"/>
<dbReference type="GeneID" id="886826"/>
<dbReference type="KEGG" id="mtu:Rv0159c"/>
<dbReference type="KEGG" id="mtv:RVBD_0159c"/>
<dbReference type="PATRIC" id="fig|83332.111.peg.186"/>
<dbReference type="TubercuList" id="Rv0159c"/>
<dbReference type="eggNOG" id="COG0657">
    <property type="taxonomic scope" value="Bacteria"/>
</dbReference>
<dbReference type="eggNOG" id="COG5651">
    <property type="taxonomic scope" value="Bacteria"/>
</dbReference>
<dbReference type="HOGENOM" id="CLU_028265_0_1_11"/>
<dbReference type="InParanoid" id="Q79G04"/>
<dbReference type="OrthoDB" id="4568361at2"/>
<dbReference type="PhylomeDB" id="Q79G04"/>
<dbReference type="Proteomes" id="UP000001584">
    <property type="component" value="Chromosome"/>
</dbReference>
<dbReference type="GO" id="GO:0005576">
    <property type="term" value="C:extracellular region"/>
    <property type="evidence" value="ECO:0007669"/>
    <property type="project" value="UniProtKB-KW"/>
</dbReference>
<dbReference type="Gene3D" id="3.40.50.1820">
    <property type="entry name" value="alpha/beta hydrolase"/>
    <property type="match status" value="1"/>
</dbReference>
<dbReference type="Gene3D" id="1.10.287.850">
    <property type="entry name" value="HP0062-like domain"/>
    <property type="match status" value="1"/>
</dbReference>
<dbReference type="InterPro" id="IPR029058">
    <property type="entry name" value="AB_hydrolase_fold"/>
</dbReference>
<dbReference type="InterPro" id="IPR000084">
    <property type="entry name" value="PE-PGRS_N"/>
</dbReference>
<dbReference type="InterPro" id="IPR013228">
    <property type="entry name" value="PE-PPE_C"/>
</dbReference>
<dbReference type="Pfam" id="PF00934">
    <property type="entry name" value="PE"/>
    <property type="match status" value="1"/>
</dbReference>
<dbReference type="Pfam" id="PF08237">
    <property type="entry name" value="PE-PPE"/>
    <property type="match status" value="1"/>
</dbReference>
<dbReference type="SUPFAM" id="SSF53474">
    <property type="entry name" value="alpha/beta-Hydrolases"/>
    <property type="match status" value="1"/>
</dbReference>
<dbReference type="SUPFAM" id="SSF140459">
    <property type="entry name" value="PE/PPE dimer-like"/>
    <property type="match status" value="1"/>
</dbReference>
<gene>
    <name evidence="4" type="primary">PE3</name>
    <name evidence="4" type="ordered locus">Rv0159c</name>
</gene>
<comment type="function">
    <text evidence="2">Plays significant roles in mycobacterial persistence during infection and modulates host immune response.</text>
</comment>
<comment type="subcellular location">
    <subcellularLocation>
        <location evidence="2">Secreted</location>
        <location evidence="2">Cell wall</location>
    </subcellularLocation>
</comment>
<comment type="induction">
    <text evidence="2">Expression is high during exponential phase. Induced during hypoxic conditions. Induced in the lung and in spleen tissues of mice during the early and chronic stages of infection.</text>
</comment>
<comment type="biotechnology">
    <text evidence="2">Could be a prospective candidate for the development of subunit vaccine against tuberculosis.</text>
</comment>
<comment type="miscellaneous">
    <text evidence="2">The immunization of mice with recombinant PE3 protein stimulates the secretion of TNF, IL-6 and IL-2 cytokines and generates strong protective immunity against challenge with live mycobacteria.</text>
</comment>
<comment type="similarity">
    <text evidence="3">Belongs to the mycobacterial PE family.</text>
</comment>
<keyword id="KW-0134">Cell wall</keyword>
<keyword id="KW-1185">Reference proteome</keyword>
<keyword id="KW-0964">Secreted</keyword>
<keyword id="KW-0843">Virulence</keyword>